<comment type="function">
    <text evidence="1">IGPS catalyzes the conversion of PRFAR and glutamine to IGP, AICAR and glutamate. The HisH subunit catalyzes the hydrolysis of glutamine to glutamate and ammonia as part of the synthesis of IGP and AICAR. The resulting ammonia molecule is channeled to the active site of HisF.</text>
</comment>
<comment type="catalytic activity">
    <reaction evidence="1">
        <text>5-[(5-phospho-1-deoxy-D-ribulos-1-ylimino)methylamino]-1-(5-phospho-beta-D-ribosyl)imidazole-4-carboxamide + L-glutamine = D-erythro-1-(imidazol-4-yl)glycerol 3-phosphate + 5-amino-1-(5-phospho-beta-D-ribosyl)imidazole-4-carboxamide + L-glutamate + H(+)</text>
        <dbReference type="Rhea" id="RHEA:24793"/>
        <dbReference type="ChEBI" id="CHEBI:15378"/>
        <dbReference type="ChEBI" id="CHEBI:29985"/>
        <dbReference type="ChEBI" id="CHEBI:58278"/>
        <dbReference type="ChEBI" id="CHEBI:58359"/>
        <dbReference type="ChEBI" id="CHEBI:58475"/>
        <dbReference type="ChEBI" id="CHEBI:58525"/>
        <dbReference type="EC" id="4.3.2.10"/>
    </reaction>
</comment>
<comment type="catalytic activity">
    <reaction evidence="1">
        <text>L-glutamine + H2O = L-glutamate + NH4(+)</text>
        <dbReference type="Rhea" id="RHEA:15889"/>
        <dbReference type="ChEBI" id="CHEBI:15377"/>
        <dbReference type="ChEBI" id="CHEBI:28938"/>
        <dbReference type="ChEBI" id="CHEBI:29985"/>
        <dbReference type="ChEBI" id="CHEBI:58359"/>
        <dbReference type="EC" id="3.5.1.2"/>
    </reaction>
</comment>
<comment type="pathway">
    <text evidence="1">Amino-acid biosynthesis; L-histidine biosynthesis; L-histidine from 5-phospho-alpha-D-ribose 1-diphosphate: step 5/9.</text>
</comment>
<comment type="subunit">
    <text evidence="1">Heterodimer of HisH and HisF.</text>
</comment>
<comment type="subcellular location">
    <subcellularLocation>
        <location evidence="1">Cytoplasm</location>
    </subcellularLocation>
</comment>
<name>HIS5_LISMC</name>
<protein>
    <recommendedName>
        <fullName evidence="1">Imidazole glycerol phosphate synthase subunit HisH</fullName>
        <ecNumber evidence="1">4.3.2.10</ecNumber>
    </recommendedName>
    <alternativeName>
        <fullName evidence="1">IGP synthase glutaminase subunit</fullName>
        <ecNumber evidence="1">3.5.1.2</ecNumber>
    </alternativeName>
    <alternativeName>
        <fullName evidence="1">IGP synthase subunit HisH</fullName>
    </alternativeName>
    <alternativeName>
        <fullName evidence="1">ImGP synthase subunit HisH</fullName>
        <shortName evidence="1">IGPS subunit HisH</shortName>
    </alternativeName>
</protein>
<proteinExistence type="inferred from homology"/>
<gene>
    <name evidence="1" type="primary">hisH</name>
    <name type="ordered locus">Lm4b_00591</name>
</gene>
<organism>
    <name type="scientific">Listeria monocytogenes serotype 4b (strain CLIP80459)</name>
    <dbReference type="NCBI Taxonomy" id="568819"/>
    <lineage>
        <taxon>Bacteria</taxon>
        <taxon>Bacillati</taxon>
        <taxon>Bacillota</taxon>
        <taxon>Bacilli</taxon>
        <taxon>Bacillales</taxon>
        <taxon>Listeriaceae</taxon>
        <taxon>Listeria</taxon>
    </lineage>
</organism>
<dbReference type="EC" id="4.3.2.10" evidence="1"/>
<dbReference type="EC" id="3.5.1.2" evidence="1"/>
<dbReference type="EMBL" id="FM242711">
    <property type="protein sequence ID" value="CAS04359.1"/>
    <property type="molecule type" value="Genomic_DNA"/>
</dbReference>
<dbReference type="RefSeq" id="WP_003725467.1">
    <property type="nucleotide sequence ID" value="NC_012488.1"/>
</dbReference>
<dbReference type="SMR" id="C1L0J4"/>
<dbReference type="KEGG" id="lmc:Lm4b_00591"/>
<dbReference type="HOGENOM" id="CLU_071837_2_2_9"/>
<dbReference type="UniPathway" id="UPA00031">
    <property type="reaction ID" value="UER00010"/>
</dbReference>
<dbReference type="GO" id="GO:0005737">
    <property type="term" value="C:cytoplasm"/>
    <property type="evidence" value="ECO:0007669"/>
    <property type="project" value="UniProtKB-SubCell"/>
</dbReference>
<dbReference type="GO" id="GO:0004359">
    <property type="term" value="F:glutaminase activity"/>
    <property type="evidence" value="ECO:0007669"/>
    <property type="project" value="UniProtKB-EC"/>
</dbReference>
<dbReference type="GO" id="GO:0000107">
    <property type="term" value="F:imidazoleglycerol-phosphate synthase activity"/>
    <property type="evidence" value="ECO:0007669"/>
    <property type="project" value="UniProtKB-UniRule"/>
</dbReference>
<dbReference type="GO" id="GO:0016829">
    <property type="term" value="F:lyase activity"/>
    <property type="evidence" value="ECO:0007669"/>
    <property type="project" value="UniProtKB-KW"/>
</dbReference>
<dbReference type="GO" id="GO:0000105">
    <property type="term" value="P:L-histidine biosynthetic process"/>
    <property type="evidence" value="ECO:0007669"/>
    <property type="project" value="UniProtKB-UniRule"/>
</dbReference>
<dbReference type="CDD" id="cd01748">
    <property type="entry name" value="GATase1_IGP_Synthase"/>
    <property type="match status" value="1"/>
</dbReference>
<dbReference type="FunFam" id="3.40.50.880:FF:000028">
    <property type="entry name" value="Imidazole glycerol phosphate synthase subunit HisH"/>
    <property type="match status" value="1"/>
</dbReference>
<dbReference type="Gene3D" id="3.40.50.880">
    <property type="match status" value="1"/>
</dbReference>
<dbReference type="HAMAP" id="MF_00278">
    <property type="entry name" value="HisH"/>
    <property type="match status" value="1"/>
</dbReference>
<dbReference type="InterPro" id="IPR029062">
    <property type="entry name" value="Class_I_gatase-like"/>
</dbReference>
<dbReference type="InterPro" id="IPR017926">
    <property type="entry name" value="GATASE"/>
</dbReference>
<dbReference type="InterPro" id="IPR010139">
    <property type="entry name" value="Imidazole-glycPsynth_HisH"/>
</dbReference>
<dbReference type="NCBIfam" id="TIGR01855">
    <property type="entry name" value="IMP_synth_hisH"/>
    <property type="match status" value="1"/>
</dbReference>
<dbReference type="PANTHER" id="PTHR42701">
    <property type="entry name" value="IMIDAZOLE GLYCEROL PHOSPHATE SYNTHASE SUBUNIT HISH"/>
    <property type="match status" value="1"/>
</dbReference>
<dbReference type="PANTHER" id="PTHR42701:SF1">
    <property type="entry name" value="IMIDAZOLE GLYCEROL PHOSPHATE SYNTHASE SUBUNIT HISH"/>
    <property type="match status" value="1"/>
</dbReference>
<dbReference type="Pfam" id="PF00117">
    <property type="entry name" value="GATase"/>
    <property type="match status" value="1"/>
</dbReference>
<dbReference type="PIRSF" id="PIRSF000495">
    <property type="entry name" value="Amidotransf_hisH"/>
    <property type="match status" value="1"/>
</dbReference>
<dbReference type="SUPFAM" id="SSF52317">
    <property type="entry name" value="Class I glutamine amidotransferase-like"/>
    <property type="match status" value="1"/>
</dbReference>
<dbReference type="PROSITE" id="PS51273">
    <property type="entry name" value="GATASE_TYPE_1"/>
    <property type="match status" value="1"/>
</dbReference>
<feature type="chain" id="PRO_1000204804" description="Imidazole glycerol phosphate synthase subunit HisH">
    <location>
        <begin position="1"/>
        <end position="208"/>
    </location>
</feature>
<feature type="domain" description="Glutamine amidotransferase type-1" evidence="1">
    <location>
        <begin position="1"/>
        <end position="206"/>
    </location>
</feature>
<feature type="active site" description="Nucleophile" evidence="1">
    <location>
        <position position="79"/>
    </location>
</feature>
<feature type="active site" evidence="1">
    <location>
        <position position="181"/>
    </location>
</feature>
<feature type="active site" evidence="1">
    <location>
        <position position="183"/>
    </location>
</feature>
<reference key="1">
    <citation type="journal article" date="2012" name="BMC Genomics">
        <title>Comparative genomics and transcriptomics of lineages I, II, and III strains of Listeria monocytogenes.</title>
        <authorList>
            <person name="Hain T."/>
            <person name="Ghai R."/>
            <person name="Billion A."/>
            <person name="Kuenne C.T."/>
            <person name="Steinweg C."/>
            <person name="Izar B."/>
            <person name="Mohamed W."/>
            <person name="Mraheil M."/>
            <person name="Domann E."/>
            <person name="Schaffrath S."/>
            <person name="Karst U."/>
            <person name="Goesmann A."/>
            <person name="Oehm S."/>
            <person name="Puhler A."/>
            <person name="Merkl R."/>
            <person name="Vorwerk S."/>
            <person name="Glaser P."/>
            <person name="Garrido P."/>
            <person name="Rusniok C."/>
            <person name="Buchrieser C."/>
            <person name="Goebel W."/>
            <person name="Chakraborty T."/>
        </authorList>
    </citation>
    <scope>NUCLEOTIDE SEQUENCE [LARGE SCALE GENOMIC DNA]</scope>
    <source>
        <strain>CLIP80459</strain>
    </source>
</reference>
<keyword id="KW-0028">Amino-acid biosynthesis</keyword>
<keyword id="KW-0963">Cytoplasm</keyword>
<keyword id="KW-0315">Glutamine amidotransferase</keyword>
<keyword id="KW-0368">Histidine biosynthesis</keyword>
<keyword id="KW-0378">Hydrolase</keyword>
<keyword id="KW-0456">Lyase</keyword>
<sequence>MIVIIDYDTGNTKSISKALDFIGLQNKISSDKTEIAQADGVILPGVGAYPEAMQELTRRGLDKTLKEIATAGKPILGVCLGMQLLLESSNEHSYTKGLGLIPGHVEMLPDESEFAVPHMGWNQLQIKRTTPLTQNIAGEYVYYVHSYYANCPEAYIIATSGYSIDIPGMINNGNIYGAQFHPEKSGQIGLEILKGFKEVIRSCKSSQQ</sequence>
<evidence type="ECO:0000255" key="1">
    <source>
        <dbReference type="HAMAP-Rule" id="MF_00278"/>
    </source>
</evidence>
<accession>C1L0J4</accession>